<evidence type="ECO:0000255" key="1">
    <source>
        <dbReference type="HAMAP-Rule" id="MF_00270"/>
    </source>
</evidence>
<evidence type="ECO:0000305" key="2"/>
<name>RR18_NICTO</name>
<dbReference type="EMBL" id="AB240139">
    <property type="protein sequence ID" value="BAE48025.1"/>
    <property type="molecule type" value="Genomic_DNA"/>
</dbReference>
<dbReference type="RefSeq" id="YP_398887.1">
    <property type="nucleotide sequence ID" value="NC_007602.1"/>
</dbReference>
<dbReference type="SMR" id="Q33C10"/>
<dbReference type="GeneID" id="3776386"/>
<dbReference type="KEGG" id="nto:3776386"/>
<dbReference type="OrthoDB" id="21463at2759"/>
<dbReference type="GO" id="GO:0009507">
    <property type="term" value="C:chloroplast"/>
    <property type="evidence" value="ECO:0007669"/>
    <property type="project" value="UniProtKB-SubCell"/>
</dbReference>
<dbReference type="GO" id="GO:0005763">
    <property type="term" value="C:mitochondrial small ribosomal subunit"/>
    <property type="evidence" value="ECO:0007669"/>
    <property type="project" value="TreeGrafter"/>
</dbReference>
<dbReference type="GO" id="GO:0070181">
    <property type="term" value="F:small ribosomal subunit rRNA binding"/>
    <property type="evidence" value="ECO:0007669"/>
    <property type="project" value="TreeGrafter"/>
</dbReference>
<dbReference type="GO" id="GO:0003735">
    <property type="term" value="F:structural constituent of ribosome"/>
    <property type="evidence" value="ECO:0007669"/>
    <property type="project" value="InterPro"/>
</dbReference>
<dbReference type="GO" id="GO:0006412">
    <property type="term" value="P:translation"/>
    <property type="evidence" value="ECO:0007669"/>
    <property type="project" value="UniProtKB-UniRule"/>
</dbReference>
<dbReference type="FunFam" id="4.10.640.10:FF:000002">
    <property type="entry name" value="30S ribosomal protein S18, chloroplastic"/>
    <property type="match status" value="1"/>
</dbReference>
<dbReference type="Gene3D" id="4.10.640.10">
    <property type="entry name" value="Ribosomal protein S18"/>
    <property type="match status" value="1"/>
</dbReference>
<dbReference type="HAMAP" id="MF_00270">
    <property type="entry name" value="Ribosomal_bS18"/>
    <property type="match status" value="1"/>
</dbReference>
<dbReference type="InterPro" id="IPR001648">
    <property type="entry name" value="Ribosomal_bS18"/>
</dbReference>
<dbReference type="InterPro" id="IPR018275">
    <property type="entry name" value="Ribosomal_bS18_CS"/>
</dbReference>
<dbReference type="InterPro" id="IPR036870">
    <property type="entry name" value="Ribosomal_bS18_sf"/>
</dbReference>
<dbReference type="NCBIfam" id="TIGR00165">
    <property type="entry name" value="S18"/>
    <property type="match status" value="1"/>
</dbReference>
<dbReference type="PANTHER" id="PTHR13479">
    <property type="entry name" value="30S RIBOSOMAL PROTEIN S18"/>
    <property type="match status" value="1"/>
</dbReference>
<dbReference type="PANTHER" id="PTHR13479:SF40">
    <property type="entry name" value="SMALL RIBOSOMAL SUBUNIT PROTEIN BS18M"/>
    <property type="match status" value="1"/>
</dbReference>
<dbReference type="Pfam" id="PF01084">
    <property type="entry name" value="Ribosomal_S18"/>
    <property type="match status" value="1"/>
</dbReference>
<dbReference type="PRINTS" id="PR00974">
    <property type="entry name" value="RIBOSOMALS18"/>
</dbReference>
<dbReference type="SUPFAM" id="SSF46911">
    <property type="entry name" value="Ribosomal protein S18"/>
    <property type="match status" value="1"/>
</dbReference>
<dbReference type="PROSITE" id="PS00057">
    <property type="entry name" value="RIBOSOMAL_S18"/>
    <property type="match status" value="1"/>
</dbReference>
<feature type="chain" id="PRO_0000276878" description="Small ribosomal subunit protein bS18c">
    <location>
        <begin position="1"/>
        <end position="101"/>
    </location>
</feature>
<keyword id="KW-0150">Chloroplast</keyword>
<keyword id="KW-0934">Plastid</keyword>
<keyword id="KW-0687">Ribonucleoprotein</keyword>
<keyword id="KW-0689">Ribosomal protein</keyword>
<keyword id="KW-0694">RNA-binding</keyword>
<keyword id="KW-0699">rRNA-binding</keyword>
<sequence length="101" mass="12052">MDKSKRPFLKFKRSFRRRLPPIQSGDRIDYRNMSLISRFISEQGKILSRRVNRLTLKQQRLITLAIKQARILSLLPFLNNEKQFERTESTARTTGFKARNK</sequence>
<proteinExistence type="inferred from homology"/>
<reference key="1">
    <citation type="journal article" date="2006" name="Mol. Genet. Genomics">
        <title>The chloroplast genome of Nicotiana sylvestris and Nicotiana tomentosiformis: complete sequencing confirms that the Nicotiana sylvestris progenitor is the maternal genome donor of Nicotiana tabacum.</title>
        <authorList>
            <person name="Yukawa M."/>
            <person name="Tsudzuki T."/>
            <person name="Sugiura M."/>
        </authorList>
    </citation>
    <scope>NUCLEOTIDE SEQUENCE [LARGE SCALE GENOMIC DNA]</scope>
</reference>
<comment type="subunit">
    <text>Part of the 30S ribosomal subunit.</text>
</comment>
<comment type="subcellular location">
    <subcellularLocation>
        <location>Plastid</location>
        <location>Chloroplast</location>
    </subcellularLocation>
</comment>
<comment type="similarity">
    <text evidence="1">Belongs to the bacterial ribosomal protein bS18 family.</text>
</comment>
<accession>Q33C10</accession>
<protein>
    <recommendedName>
        <fullName evidence="1">Small ribosomal subunit protein bS18c</fullName>
    </recommendedName>
    <alternativeName>
        <fullName evidence="2">30S ribosomal protein S18, chloroplastic</fullName>
    </alternativeName>
</protein>
<geneLocation type="chloroplast"/>
<organism>
    <name type="scientific">Nicotiana tomentosiformis</name>
    <name type="common">Tobacco</name>
    <dbReference type="NCBI Taxonomy" id="4098"/>
    <lineage>
        <taxon>Eukaryota</taxon>
        <taxon>Viridiplantae</taxon>
        <taxon>Streptophyta</taxon>
        <taxon>Embryophyta</taxon>
        <taxon>Tracheophyta</taxon>
        <taxon>Spermatophyta</taxon>
        <taxon>Magnoliopsida</taxon>
        <taxon>eudicotyledons</taxon>
        <taxon>Gunneridae</taxon>
        <taxon>Pentapetalae</taxon>
        <taxon>asterids</taxon>
        <taxon>lamiids</taxon>
        <taxon>Solanales</taxon>
        <taxon>Solanaceae</taxon>
        <taxon>Nicotianoideae</taxon>
        <taxon>Nicotianeae</taxon>
        <taxon>Nicotiana</taxon>
    </lineage>
</organism>
<gene>
    <name evidence="1" type="primary">rps18</name>
</gene>